<sequence length="342" mass="35663">MSANGPAAEPADGGRAVPAGGGEAVPAGGGRAVPAGGGEAAGTVVAVVGPTAAGKSALSIALAHALDGEVVNADSMQLYRGMDIGTAKLTTGEREGVPHHLLDIWPVTEPASVAEYQRLARAAVDDILARGRVPLLVGGSGLYVRAVLERFEFPGTDPAVRARLEAELAQAGPAPLHARLRAADPDAAASILPGNGRRIVRALEVIELTGAPFTAALPDPSPYYRSVQVGVDLDTAPLDERIALRVDRMWADGLVAETRALAAQGLAGGRTASRALGYQQVLRFLAGELTETEAHQETIRATRRFVRRQRSWFRRDPRIAWLDSAGSGLVADALRAVRAAAR</sequence>
<keyword id="KW-0067">ATP-binding</keyword>
<keyword id="KW-0460">Magnesium</keyword>
<keyword id="KW-0547">Nucleotide-binding</keyword>
<keyword id="KW-0808">Transferase</keyword>
<keyword id="KW-0819">tRNA processing</keyword>
<evidence type="ECO:0000255" key="1">
    <source>
        <dbReference type="HAMAP-Rule" id="MF_00185"/>
    </source>
</evidence>
<evidence type="ECO:0000256" key="2">
    <source>
        <dbReference type="SAM" id="MobiDB-lite"/>
    </source>
</evidence>
<organism>
    <name type="scientific">Salinispora arenicola (strain CNS-205)</name>
    <dbReference type="NCBI Taxonomy" id="391037"/>
    <lineage>
        <taxon>Bacteria</taxon>
        <taxon>Bacillati</taxon>
        <taxon>Actinomycetota</taxon>
        <taxon>Actinomycetes</taxon>
        <taxon>Micromonosporales</taxon>
        <taxon>Micromonosporaceae</taxon>
        <taxon>Salinispora</taxon>
    </lineage>
</organism>
<accession>A8M7W9</accession>
<reference key="1">
    <citation type="submission" date="2007-10" db="EMBL/GenBank/DDBJ databases">
        <title>Complete sequence of Salinispora arenicola CNS-205.</title>
        <authorList>
            <consortium name="US DOE Joint Genome Institute"/>
            <person name="Copeland A."/>
            <person name="Lucas S."/>
            <person name="Lapidus A."/>
            <person name="Barry K."/>
            <person name="Glavina del Rio T."/>
            <person name="Dalin E."/>
            <person name="Tice H."/>
            <person name="Pitluck S."/>
            <person name="Foster B."/>
            <person name="Schmutz J."/>
            <person name="Larimer F."/>
            <person name="Land M."/>
            <person name="Hauser L."/>
            <person name="Kyrpides N."/>
            <person name="Ivanova N."/>
            <person name="Jensen P.R."/>
            <person name="Moore B.S."/>
            <person name="Penn K."/>
            <person name="Jenkins C."/>
            <person name="Udwary D."/>
            <person name="Xiang L."/>
            <person name="Gontang E."/>
            <person name="Richardson P."/>
        </authorList>
    </citation>
    <scope>NUCLEOTIDE SEQUENCE [LARGE SCALE GENOMIC DNA]</scope>
    <source>
        <strain>CNS-205</strain>
    </source>
</reference>
<proteinExistence type="inferred from homology"/>
<feature type="chain" id="PRO_0000377304" description="tRNA dimethylallyltransferase">
    <location>
        <begin position="1"/>
        <end position="342"/>
    </location>
</feature>
<feature type="region of interest" description="Disordered" evidence="2">
    <location>
        <begin position="1"/>
        <end position="30"/>
    </location>
</feature>
<feature type="region of interest" description="Interaction with substrate tRNA" evidence="1">
    <location>
        <begin position="74"/>
        <end position="77"/>
    </location>
</feature>
<feature type="compositionally biased region" description="Gly residues" evidence="2">
    <location>
        <begin position="19"/>
        <end position="30"/>
    </location>
</feature>
<feature type="binding site" evidence="1">
    <location>
        <begin position="49"/>
        <end position="56"/>
    </location>
    <ligand>
        <name>ATP</name>
        <dbReference type="ChEBI" id="CHEBI:30616"/>
    </ligand>
</feature>
<feature type="binding site" evidence="1">
    <location>
        <begin position="51"/>
        <end position="56"/>
    </location>
    <ligand>
        <name>substrate</name>
    </ligand>
</feature>
<feature type="site" description="Interaction with substrate tRNA" evidence="1">
    <location>
        <position position="140"/>
    </location>
</feature>
<feature type="site" description="Interaction with substrate tRNA" evidence="1">
    <location>
        <position position="161"/>
    </location>
</feature>
<name>MIAA_SALAI</name>
<comment type="function">
    <text evidence="1">Catalyzes the transfer of a dimethylallyl group onto the adenine at position 37 in tRNAs that read codons beginning with uridine, leading to the formation of N6-(dimethylallyl)adenosine (i(6)A).</text>
</comment>
<comment type="catalytic activity">
    <reaction evidence="1">
        <text>adenosine(37) in tRNA + dimethylallyl diphosphate = N(6)-dimethylallyladenosine(37) in tRNA + diphosphate</text>
        <dbReference type="Rhea" id="RHEA:26482"/>
        <dbReference type="Rhea" id="RHEA-COMP:10162"/>
        <dbReference type="Rhea" id="RHEA-COMP:10375"/>
        <dbReference type="ChEBI" id="CHEBI:33019"/>
        <dbReference type="ChEBI" id="CHEBI:57623"/>
        <dbReference type="ChEBI" id="CHEBI:74411"/>
        <dbReference type="ChEBI" id="CHEBI:74415"/>
        <dbReference type="EC" id="2.5.1.75"/>
    </reaction>
</comment>
<comment type="cofactor">
    <cofactor evidence="1">
        <name>Mg(2+)</name>
        <dbReference type="ChEBI" id="CHEBI:18420"/>
    </cofactor>
</comment>
<comment type="subunit">
    <text evidence="1">Monomer.</text>
</comment>
<comment type="similarity">
    <text evidence="1">Belongs to the IPP transferase family.</text>
</comment>
<protein>
    <recommendedName>
        <fullName evidence="1">tRNA dimethylallyltransferase</fullName>
        <ecNumber evidence="1">2.5.1.75</ecNumber>
    </recommendedName>
    <alternativeName>
        <fullName evidence="1">Dimethylallyl diphosphate:tRNA dimethylallyltransferase</fullName>
        <shortName evidence="1">DMAPP:tRNA dimethylallyltransferase</shortName>
        <shortName evidence="1">DMATase</shortName>
    </alternativeName>
    <alternativeName>
        <fullName evidence="1">Isopentenyl-diphosphate:tRNA isopentenyltransferase</fullName>
        <shortName evidence="1">IPP transferase</shortName>
        <shortName evidence="1">IPPT</shortName>
        <shortName evidence="1">IPTase</shortName>
    </alternativeName>
</protein>
<dbReference type="EC" id="2.5.1.75" evidence="1"/>
<dbReference type="EMBL" id="CP000850">
    <property type="protein sequence ID" value="ABV97303.1"/>
    <property type="molecule type" value="Genomic_DNA"/>
</dbReference>
<dbReference type="SMR" id="A8M7W9"/>
<dbReference type="STRING" id="391037.Sare_1403"/>
<dbReference type="KEGG" id="saq:Sare_1403"/>
<dbReference type="PATRIC" id="fig|391037.6.peg.1428"/>
<dbReference type="eggNOG" id="COG0324">
    <property type="taxonomic scope" value="Bacteria"/>
</dbReference>
<dbReference type="HOGENOM" id="CLU_032616_0_1_11"/>
<dbReference type="OrthoDB" id="9776390at2"/>
<dbReference type="GO" id="GO:0005524">
    <property type="term" value="F:ATP binding"/>
    <property type="evidence" value="ECO:0007669"/>
    <property type="project" value="UniProtKB-UniRule"/>
</dbReference>
<dbReference type="GO" id="GO:0052381">
    <property type="term" value="F:tRNA dimethylallyltransferase activity"/>
    <property type="evidence" value="ECO:0007669"/>
    <property type="project" value="UniProtKB-UniRule"/>
</dbReference>
<dbReference type="GO" id="GO:0006400">
    <property type="term" value="P:tRNA modification"/>
    <property type="evidence" value="ECO:0007669"/>
    <property type="project" value="TreeGrafter"/>
</dbReference>
<dbReference type="FunFam" id="1.10.20.140:FF:000001">
    <property type="entry name" value="tRNA dimethylallyltransferase"/>
    <property type="match status" value="1"/>
</dbReference>
<dbReference type="Gene3D" id="1.10.20.140">
    <property type="match status" value="1"/>
</dbReference>
<dbReference type="Gene3D" id="3.40.50.300">
    <property type="entry name" value="P-loop containing nucleotide triphosphate hydrolases"/>
    <property type="match status" value="1"/>
</dbReference>
<dbReference type="HAMAP" id="MF_00185">
    <property type="entry name" value="IPP_trans"/>
    <property type="match status" value="1"/>
</dbReference>
<dbReference type="InterPro" id="IPR039657">
    <property type="entry name" value="Dimethylallyltransferase"/>
</dbReference>
<dbReference type="InterPro" id="IPR018022">
    <property type="entry name" value="IPT"/>
</dbReference>
<dbReference type="InterPro" id="IPR027417">
    <property type="entry name" value="P-loop_NTPase"/>
</dbReference>
<dbReference type="NCBIfam" id="TIGR00174">
    <property type="entry name" value="miaA"/>
    <property type="match status" value="1"/>
</dbReference>
<dbReference type="PANTHER" id="PTHR11088">
    <property type="entry name" value="TRNA DIMETHYLALLYLTRANSFERASE"/>
    <property type="match status" value="1"/>
</dbReference>
<dbReference type="PANTHER" id="PTHR11088:SF60">
    <property type="entry name" value="TRNA DIMETHYLALLYLTRANSFERASE"/>
    <property type="match status" value="1"/>
</dbReference>
<dbReference type="Pfam" id="PF01715">
    <property type="entry name" value="IPPT"/>
    <property type="match status" value="1"/>
</dbReference>
<dbReference type="SUPFAM" id="SSF52540">
    <property type="entry name" value="P-loop containing nucleoside triphosphate hydrolases"/>
    <property type="match status" value="1"/>
</dbReference>
<gene>
    <name evidence="1" type="primary">miaA</name>
    <name type="ordered locus">Sare_1403</name>
</gene>